<evidence type="ECO:0000255" key="1">
    <source>
        <dbReference type="HAMAP-Rule" id="MF_00435"/>
    </source>
</evidence>
<evidence type="ECO:0000255" key="2">
    <source>
        <dbReference type="PROSITE-ProRule" id="PRU01197"/>
    </source>
</evidence>
<evidence type="ECO:0000255" key="3">
    <source>
        <dbReference type="PROSITE-ProRule" id="PRU01198"/>
    </source>
</evidence>
<comment type="function">
    <text evidence="1">Involved in the biosynthesis of branched-chain amino acids (BCAA). Catalyzes an alkyl-migration followed by a ketol-acid reduction of (S)-2-acetolactate (S2AL) to yield (R)-2,3-dihydroxy-isovalerate. In the isomerase reaction, S2AL is rearranged via a Mg-dependent methyl migration to produce 3-hydroxy-3-methyl-2-ketobutyrate (HMKB). In the reductase reaction, this 2-ketoacid undergoes a metal-dependent reduction by NADPH to yield (R)-2,3-dihydroxy-isovalerate.</text>
</comment>
<comment type="catalytic activity">
    <reaction evidence="1">
        <text>(2R)-2,3-dihydroxy-3-methylbutanoate + NADP(+) = (2S)-2-acetolactate + NADPH + H(+)</text>
        <dbReference type="Rhea" id="RHEA:22068"/>
        <dbReference type="ChEBI" id="CHEBI:15378"/>
        <dbReference type="ChEBI" id="CHEBI:49072"/>
        <dbReference type="ChEBI" id="CHEBI:57783"/>
        <dbReference type="ChEBI" id="CHEBI:58349"/>
        <dbReference type="ChEBI" id="CHEBI:58476"/>
        <dbReference type="EC" id="1.1.1.86"/>
    </reaction>
</comment>
<comment type="catalytic activity">
    <reaction evidence="1">
        <text>(2R,3R)-2,3-dihydroxy-3-methylpentanoate + NADP(+) = (S)-2-ethyl-2-hydroxy-3-oxobutanoate + NADPH + H(+)</text>
        <dbReference type="Rhea" id="RHEA:13493"/>
        <dbReference type="ChEBI" id="CHEBI:15378"/>
        <dbReference type="ChEBI" id="CHEBI:49256"/>
        <dbReference type="ChEBI" id="CHEBI:49258"/>
        <dbReference type="ChEBI" id="CHEBI:57783"/>
        <dbReference type="ChEBI" id="CHEBI:58349"/>
        <dbReference type="EC" id="1.1.1.86"/>
    </reaction>
</comment>
<comment type="cofactor">
    <cofactor evidence="1">
        <name>Mg(2+)</name>
        <dbReference type="ChEBI" id="CHEBI:18420"/>
    </cofactor>
    <text evidence="1">Binds 2 magnesium ions per subunit.</text>
</comment>
<comment type="pathway">
    <text evidence="1">Amino-acid biosynthesis; L-isoleucine biosynthesis; L-isoleucine from 2-oxobutanoate: step 2/4.</text>
</comment>
<comment type="pathway">
    <text evidence="1">Amino-acid biosynthesis; L-valine biosynthesis; L-valine from pyruvate: step 2/4.</text>
</comment>
<comment type="similarity">
    <text evidence="1">Belongs to the ketol-acid reductoisomerase family.</text>
</comment>
<accession>B0CHG8</accession>
<proteinExistence type="inferred from homology"/>
<feature type="chain" id="PRO_1000080620" description="Ketol-acid reductoisomerase (NADP(+))">
    <location>
        <begin position="1"/>
        <end position="339"/>
    </location>
</feature>
<feature type="domain" description="KARI N-terminal Rossmann" evidence="2">
    <location>
        <begin position="1"/>
        <end position="182"/>
    </location>
</feature>
<feature type="domain" description="KARI C-terminal knotted" evidence="3">
    <location>
        <begin position="183"/>
        <end position="328"/>
    </location>
</feature>
<feature type="active site" evidence="1">
    <location>
        <position position="108"/>
    </location>
</feature>
<feature type="binding site" evidence="1">
    <location>
        <begin position="24"/>
        <end position="27"/>
    </location>
    <ligand>
        <name>NADP(+)</name>
        <dbReference type="ChEBI" id="CHEBI:58349"/>
    </ligand>
</feature>
<feature type="binding site" evidence="1">
    <location>
        <position position="48"/>
    </location>
    <ligand>
        <name>NADP(+)</name>
        <dbReference type="ChEBI" id="CHEBI:58349"/>
    </ligand>
</feature>
<feature type="binding site" evidence="1">
    <location>
        <position position="51"/>
    </location>
    <ligand>
        <name>NADP(+)</name>
        <dbReference type="ChEBI" id="CHEBI:58349"/>
    </ligand>
</feature>
<feature type="binding site" evidence="1">
    <location>
        <position position="53"/>
    </location>
    <ligand>
        <name>NADP(+)</name>
        <dbReference type="ChEBI" id="CHEBI:58349"/>
    </ligand>
</feature>
<feature type="binding site" evidence="1">
    <location>
        <begin position="83"/>
        <end position="86"/>
    </location>
    <ligand>
        <name>NADP(+)</name>
        <dbReference type="ChEBI" id="CHEBI:58349"/>
    </ligand>
</feature>
<feature type="binding site" evidence="1">
    <location>
        <position position="134"/>
    </location>
    <ligand>
        <name>NADP(+)</name>
        <dbReference type="ChEBI" id="CHEBI:58349"/>
    </ligand>
</feature>
<feature type="binding site" evidence="1">
    <location>
        <position position="191"/>
    </location>
    <ligand>
        <name>Mg(2+)</name>
        <dbReference type="ChEBI" id="CHEBI:18420"/>
        <label>1</label>
    </ligand>
</feature>
<feature type="binding site" evidence="1">
    <location>
        <position position="191"/>
    </location>
    <ligand>
        <name>Mg(2+)</name>
        <dbReference type="ChEBI" id="CHEBI:18420"/>
        <label>2</label>
    </ligand>
</feature>
<feature type="binding site" evidence="1">
    <location>
        <position position="195"/>
    </location>
    <ligand>
        <name>Mg(2+)</name>
        <dbReference type="ChEBI" id="CHEBI:18420"/>
        <label>1</label>
    </ligand>
</feature>
<feature type="binding site" evidence="1">
    <location>
        <position position="227"/>
    </location>
    <ligand>
        <name>Mg(2+)</name>
        <dbReference type="ChEBI" id="CHEBI:18420"/>
        <label>2</label>
    </ligand>
</feature>
<feature type="binding site" evidence="1">
    <location>
        <position position="231"/>
    </location>
    <ligand>
        <name>Mg(2+)</name>
        <dbReference type="ChEBI" id="CHEBI:18420"/>
        <label>2</label>
    </ligand>
</feature>
<feature type="binding site" evidence="1">
    <location>
        <position position="252"/>
    </location>
    <ligand>
        <name>substrate</name>
    </ligand>
</feature>
<reference key="1">
    <citation type="submission" date="2007-12" db="EMBL/GenBank/DDBJ databases">
        <title>Brucella suis ATCC 23445 whole genome shotgun sequencing project.</title>
        <authorList>
            <person name="Setubal J.C."/>
            <person name="Bowns C."/>
            <person name="Boyle S."/>
            <person name="Crasta O.R."/>
            <person name="Czar M.J."/>
            <person name="Dharmanolla C."/>
            <person name="Gillespie J.J."/>
            <person name="Kenyon R.W."/>
            <person name="Lu J."/>
            <person name="Mane S."/>
            <person name="Mohapatra S."/>
            <person name="Nagrani S."/>
            <person name="Purkayastha A."/>
            <person name="Rajasimha H.K."/>
            <person name="Shallom J.M."/>
            <person name="Shallom S."/>
            <person name="Shukla M."/>
            <person name="Snyder E.E."/>
            <person name="Sobral B.W."/>
            <person name="Wattam A.R."/>
            <person name="Will R."/>
            <person name="Williams K."/>
            <person name="Yoo H."/>
            <person name="Bruce D."/>
            <person name="Detter C."/>
            <person name="Munk C."/>
            <person name="Brettin T.S."/>
        </authorList>
    </citation>
    <scope>NUCLEOTIDE SEQUENCE [LARGE SCALE GENOMIC DNA]</scope>
    <source>
        <strain>ATCC 23445 / NCTC 10510</strain>
    </source>
</reference>
<sequence length="339" mass="37118">MRVYYDRDADVNLIKSKKVVIVGYGSQGRAHALNLKDSGAANVRVALREGSATVQKAQADGFEVMNVADAAKWADLMMMATPDELQADIYRDYIHNNLRDGAAIAFAHGLNVHFGLIEPKKTVDVVMIAPKGPGHTVRGEYQKGGGVPCLIAIHQDASGNAHDLALSYASGVGGGRSGVIETTFKEECETDLFGEQAVLCGGVVELIRTGFEVLVEAGYAPEMAYFECLNEMKLIVDLIYEGGIANMNYSISNTAEWGEYVTGPRIITAETKAEMKRVLKDIQTGKFTSDWMQEWKAGAARFKGIRRLNDAHQIEEVGGKLRAMMPWIEKNKLVDKARN</sequence>
<keyword id="KW-0028">Amino-acid biosynthesis</keyword>
<keyword id="KW-0100">Branched-chain amino acid biosynthesis</keyword>
<keyword id="KW-0460">Magnesium</keyword>
<keyword id="KW-0479">Metal-binding</keyword>
<keyword id="KW-0521">NADP</keyword>
<keyword id="KW-0560">Oxidoreductase</keyword>
<organism>
    <name type="scientific">Brucella suis (strain ATCC 23445 / NCTC 10510)</name>
    <dbReference type="NCBI Taxonomy" id="470137"/>
    <lineage>
        <taxon>Bacteria</taxon>
        <taxon>Pseudomonadati</taxon>
        <taxon>Pseudomonadota</taxon>
        <taxon>Alphaproteobacteria</taxon>
        <taxon>Hyphomicrobiales</taxon>
        <taxon>Brucellaceae</taxon>
        <taxon>Brucella/Ochrobactrum group</taxon>
        <taxon>Brucella</taxon>
    </lineage>
</organism>
<gene>
    <name evidence="1" type="primary">ilvC</name>
    <name type="ordered locus">BSUIS_A1431</name>
</gene>
<dbReference type="EC" id="1.1.1.86" evidence="1"/>
<dbReference type="EMBL" id="CP000911">
    <property type="protein sequence ID" value="ABY38469.1"/>
    <property type="molecule type" value="Genomic_DNA"/>
</dbReference>
<dbReference type="RefSeq" id="WP_006071092.1">
    <property type="nucleotide sequence ID" value="NC_010169.1"/>
</dbReference>
<dbReference type="SMR" id="B0CHG8"/>
<dbReference type="KEGG" id="bmt:BSUIS_A1431"/>
<dbReference type="HOGENOM" id="CLU_033821_0_1_5"/>
<dbReference type="UniPathway" id="UPA00047">
    <property type="reaction ID" value="UER00056"/>
</dbReference>
<dbReference type="UniPathway" id="UPA00049">
    <property type="reaction ID" value="UER00060"/>
</dbReference>
<dbReference type="PRO" id="PR:B0CHG8"/>
<dbReference type="Proteomes" id="UP000008545">
    <property type="component" value="Chromosome I"/>
</dbReference>
<dbReference type="GO" id="GO:0005829">
    <property type="term" value="C:cytosol"/>
    <property type="evidence" value="ECO:0007669"/>
    <property type="project" value="TreeGrafter"/>
</dbReference>
<dbReference type="GO" id="GO:0004455">
    <property type="term" value="F:ketol-acid reductoisomerase activity"/>
    <property type="evidence" value="ECO:0007669"/>
    <property type="project" value="UniProtKB-UniRule"/>
</dbReference>
<dbReference type="GO" id="GO:0000287">
    <property type="term" value="F:magnesium ion binding"/>
    <property type="evidence" value="ECO:0007669"/>
    <property type="project" value="UniProtKB-UniRule"/>
</dbReference>
<dbReference type="GO" id="GO:0050661">
    <property type="term" value="F:NADP binding"/>
    <property type="evidence" value="ECO:0007669"/>
    <property type="project" value="InterPro"/>
</dbReference>
<dbReference type="GO" id="GO:0009097">
    <property type="term" value="P:isoleucine biosynthetic process"/>
    <property type="evidence" value="ECO:0007669"/>
    <property type="project" value="UniProtKB-UniRule"/>
</dbReference>
<dbReference type="GO" id="GO:0009099">
    <property type="term" value="P:L-valine biosynthetic process"/>
    <property type="evidence" value="ECO:0007669"/>
    <property type="project" value="UniProtKB-UniRule"/>
</dbReference>
<dbReference type="FunFam" id="3.40.50.720:FF:000023">
    <property type="entry name" value="Ketol-acid reductoisomerase (NADP(+))"/>
    <property type="match status" value="1"/>
</dbReference>
<dbReference type="Gene3D" id="6.10.240.10">
    <property type="match status" value="1"/>
</dbReference>
<dbReference type="Gene3D" id="3.40.50.720">
    <property type="entry name" value="NAD(P)-binding Rossmann-like Domain"/>
    <property type="match status" value="1"/>
</dbReference>
<dbReference type="HAMAP" id="MF_00435">
    <property type="entry name" value="IlvC"/>
    <property type="match status" value="1"/>
</dbReference>
<dbReference type="InterPro" id="IPR008927">
    <property type="entry name" value="6-PGluconate_DH-like_C_sf"/>
</dbReference>
<dbReference type="InterPro" id="IPR013023">
    <property type="entry name" value="KARI"/>
</dbReference>
<dbReference type="InterPro" id="IPR000506">
    <property type="entry name" value="KARI_C"/>
</dbReference>
<dbReference type="InterPro" id="IPR013116">
    <property type="entry name" value="KARI_N"/>
</dbReference>
<dbReference type="InterPro" id="IPR014359">
    <property type="entry name" value="KARI_prok"/>
</dbReference>
<dbReference type="InterPro" id="IPR036291">
    <property type="entry name" value="NAD(P)-bd_dom_sf"/>
</dbReference>
<dbReference type="NCBIfam" id="TIGR00465">
    <property type="entry name" value="ilvC"/>
    <property type="match status" value="1"/>
</dbReference>
<dbReference type="NCBIfam" id="NF004017">
    <property type="entry name" value="PRK05479.1"/>
    <property type="match status" value="1"/>
</dbReference>
<dbReference type="NCBIfam" id="NF009940">
    <property type="entry name" value="PRK13403.1"/>
    <property type="match status" value="1"/>
</dbReference>
<dbReference type="PANTHER" id="PTHR21371">
    <property type="entry name" value="KETOL-ACID REDUCTOISOMERASE, MITOCHONDRIAL"/>
    <property type="match status" value="1"/>
</dbReference>
<dbReference type="PANTHER" id="PTHR21371:SF1">
    <property type="entry name" value="KETOL-ACID REDUCTOISOMERASE, MITOCHONDRIAL"/>
    <property type="match status" value="1"/>
</dbReference>
<dbReference type="Pfam" id="PF01450">
    <property type="entry name" value="KARI_C"/>
    <property type="match status" value="1"/>
</dbReference>
<dbReference type="Pfam" id="PF07991">
    <property type="entry name" value="KARI_N"/>
    <property type="match status" value="1"/>
</dbReference>
<dbReference type="PIRSF" id="PIRSF000116">
    <property type="entry name" value="IlvC_gammaproteo"/>
    <property type="match status" value="1"/>
</dbReference>
<dbReference type="SUPFAM" id="SSF48179">
    <property type="entry name" value="6-phosphogluconate dehydrogenase C-terminal domain-like"/>
    <property type="match status" value="1"/>
</dbReference>
<dbReference type="SUPFAM" id="SSF51735">
    <property type="entry name" value="NAD(P)-binding Rossmann-fold domains"/>
    <property type="match status" value="1"/>
</dbReference>
<dbReference type="PROSITE" id="PS51851">
    <property type="entry name" value="KARI_C"/>
    <property type="match status" value="1"/>
</dbReference>
<dbReference type="PROSITE" id="PS51850">
    <property type="entry name" value="KARI_N"/>
    <property type="match status" value="1"/>
</dbReference>
<protein>
    <recommendedName>
        <fullName evidence="1">Ketol-acid reductoisomerase (NADP(+))</fullName>
        <shortName evidence="1">KARI</shortName>
        <ecNumber evidence="1">1.1.1.86</ecNumber>
    </recommendedName>
    <alternativeName>
        <fullName evidence="1">Acetohydroxy-acid isomeroreductase</fullName>
        <shortName evidence="1">AHIR</shortName>
    </alternativeName>
    <alternativeName>
        <fullName evidence="1">Alpha-keto-beta-hydroxylacyl reductoisomerase</fullName>
    </alternativeName>
    <alternativeName>
        <fullName evidence="1">Ketol-acid reductoisomerase type 1</fullName>
    </alternativeName>
    <alternativeName>
        <fullName evidence="1">Ketol-acid reductoisomerase type I</fullName>
    </alternativeName>
</protein>
<name>ILVC_BRUSI</name>